<feature type="chain" id="PRO_1000082263" description="Succinate--CoA ligase [ADP-forming] subunit beta">
    <location>
        <begin position="1"/>
        <end position="389"/>
    </location>
</feature>
<feature type="domain" description="ATP-grasp" evidence="1">
    <location>
        <begin position="9"/>
        <end position="244"/>
    </location>
</feature>
<feature type="binding site" evidence="1">
    <location>
        <position position="46"/>
    </location>
    <ligand>
        <name>ATP</name>
        <dbReference type="ChEBI" id="CHEBI:30616"/>
    </ligand>
</feature>
<feature type="binding site" evidence="1">
    <location>
        <begin position="53"/>
        <end position="55"/>
    </location>
    <ligand>
        <name>ATP</name>
        <dbReference type="ChEBI" id="CHEBI:30616"/>
    </ligand>
</feature>
<feature type="binding site" evidence="1">
    <location>
        <position position="102"/>
    </location>
    <ligand>
        <name>ATP</name>
        <dbReference type="ChEBI" id="CHEBI:30616"/>
    </ligand>
</feature>
<feature type="binding site" evidence="1">
    <location>
        <position position="107"/>
    </location>
    <ligand>
        <name>ATP</name>
        <dbReference type="ChEBI" id="CHEBI:30616"/>
    </ligand>
</feature>
<feature type="binding site" evidence="1">
    <location>
        <position position="199"/>
    </location>
    <ligand>
        <name>Mg(2+)</name>
        <dbReference type="ChEBI" id="CHEBI:18420"/>
    </ligand>
</feature>
<feature type="binding site" evidence="1">
    <location>
        <position position="213"/>
    </location>
    <ligand>
        <name>Mg(2+)</name>
        <dbReference type="ChEBI" id="CHEBI:18420"/>
    </ligand>
</feature>
<feature type="binding site" evidence="1">
    <location>
        <position position="264"/>
    </location>
    <ligand>
        <name>substrate</name>
        <note>ligand shared with subunit alpha</note>
    </ligand>
</feature>
<feature type="binding site" evidence="1">
    <location>
        <begin position="321"/>
        <end position="323"/>
    </location>
    <ligand>
        <name>substrate</name>
        <note>ligand shared with subunit alpha</note>
    </ligand>
</feature>
<name>SUCC_XANOM</name>
<organism>
    <name type="scientific">Xanthomonas oryzae pv. oryzae (strain MAFF 311018)</name>
    <dbReference type="NCBI Taxonomy" id="342109"/>
    <lineage>
        <taxon>Bacteria</taxon>
        <taxon>Pseudomonadati</taxon>
        <taxon>Pseudomonadota</taxon>
        <taxon>Gammaproteobacteria</taxon>
        <taxon>Lysobacterales</taxon>
        <taxon>Lysobacteraceae</taxon>
        <taxon>Xanthomonas</taxon>
    </lineage>
</organism>
<sequence length="389" mass="41400">MNFHEYQSKQLLAEYGIPVPSGKVAATPDEAVDVATSLGKGPWMVKAQIHAGGRGKAGGVKFCKTTDDVKAAAAKMLGTKMSTYQTAGVELPINLVLVTTAGEIVKELYLSILVDRGTKTITYIASSEGGVEIEQVAAETPELIHALNVDFVEGVQGYHGRDFGFKLGLNAKQAGQFASIMVNLYKLFNEKDLALVEINPLAILDDGNLYALDGKFDSDDNAAFRQKQLVAMRDKTQEDETEVTASELDINYVTMDGNIGCMVNGAGLAMATMDVIKLNGGEPANFLDVGGGANKQRVIEAFKLILSSDKVEGIFVNIFGGIVRCDMIAEGIIAAVKEVGVKVPVVVRLEGTNVEEGKQLLRDSGMAIIPADNINDGAKKVVEAVKNAA</sequence>
<evidence type="ECO:0000255" key="1">
    <source>
        <dbReference type="HAMAP-Rule" id="MF_00558"/>
    </source>
</evidence>
<dbReference type="EC" id="6.2.1.5" evidence="1"/>
<dbReference type="EMBL" id="AP008229">
    <property type="protein sequence ID" value="BAE68231.1"/>
    <property type="molecule type" value="Genomic_DNA"/>
</dbReference>
<dbReference type="RefSeq" id="WP_011258367.1">
    <property type="nucleotide sequence ID" value="NC_007705.1"/>
</dbReference>
<dbReference type="SMR" id="Q2P5E6"/>
<dbReference type="KEGG" id="xom:XOO1476"/>
<dbReference type="HOGENOM" id="CLU_037430_0_2_6"/>
<dbReference type="UniPathway" id="UPA00223">
    <property type="reaction ID" value="UER00999"/>
</dbReference>
<dbReference type="GO" id="GO:0042709">
    <property type="term" value="C:succinate-CoA ligase complex"/>
    <property type="evidence" value="ECO:0007669"/>
    <property type="project" value="TreeGrafter"/>
</dbReference>
<dbReference type="GO" id="GO:0005524">
    <property type="term" value="F:ATP binding"/>
    <property type="evidence" value="ECO:0007669"/>
    <property type="project" value="UniProtKB-UniRule"/>
</dbReference>
<dbReference type="GO" id="GO:0000287">
    <property type="term" value="F:magnesium ion binding"/>
    <property type="evidence" value="ECO:0007669"/>
    <property type="project" value="UniProtKB-UniRule"/>
</dbReference>
<dbReference type="GO" id="GO:0004775">
    <property type="term" value="F:succinate-CoA ligase (ADP-forming) activity"/>
    <property type="evidence" value="ECO:0007669"/>
    <property type="project" value="UniProtKB-UniRule"/>
</dbReference>
<dbReference type="GO" id="GO:0004776">
    <property type="term" value="F:succinate-CoA ligase (GDP-forming) activity"/>
    <property type="evidence" value="ECO:0007669"/>
    <property type="project" value="RHEA"/>
</dbReference>
<dbReference type="GO" id="GO:0006104">
    <property type="term" value="P:succinyl-CoA metabolic process"/>
    <property type="evidence" value="ECO:0007669"/>
    <property type="project" value="TreeGrafter"/>
</dbReference>
<dbReference type="GO" id="GO:0006099">
    <property type="term" value="P:tricarboxylic acid cycle"/>
    <property type="evidence" value="ECO:0007669"/>
    <property type="project" value="UniProtKB-UniRule"/>
</dbReference>
<dbReference type="FunFam" id="3.30.1490.20:FF:000002">
    <property type="entry name" value="Succinate--CoA ligase [ADP-forming] subunit beta"/>
    <property type="match status" value="1"/>
</dbReference>
<dbReference type="FunFam" id="3.30.470.20:FF:000002">
    <property type="entry name" value="Succinate--CoA ligase [ADP-forming] subunit beta"/>
    <property type="match status" value="1"/>
</dbReference>
<dbReference type="FunFam" id="3.40.50.261:FF:000001">
    <property type="entry name" value="Succinate--CoA ligase [ADP-forming] subunit beta"/>
    <property type="match status" value="1"/>
</dbReference>
<dbReference type="Gene3D" id="3.30.1490.20">
    <property type="entry name" value="ATP-grasp fold, A domain"/>
    <property type="match status" value="1"/>
</dbReference>
<dbReference type="Gene3D" id="3.30.470.20">
    <property type="entry name" value="ATP-grasp fold, B domain"/>
    <property type="match status" value="1"/>
</dbReference>
<dbReference type="Gene3D" id="3.40.50.261">
    <property type="entry name" value="Succinyl-CoA synthetase domains"/>
    <property type="match status" value="1"/>
</dbReference>
<dbReference type="HAMAP" id="MF_00558">
    <property type="entry name" value="Succ_CoA_beta"/>
    <property type="match status" value="1"/>
</dbReference>
<dbReference type="InterPro" id="IPR011761">
    <property type="entry name" value="ATP-grasp"/>
</dbReference>
<dbReference type="InterPro" id="IPR013650">
    <property type="entry name" value="ATP-grasp_succ-CoA_synth-type"/>
</dbReference>
<dbReference type="InterPro" id="IPR013815">
    <property type="entry name" value="ATP_grasp_subdomain_1"/>
</dbReference>
<dbReference type="InterPro" id="IPR017866">
    <property type="entry name" value="Succ-CoA_synthase_bsu_CS"/>
</dbReference>
<dbReference type="InterPro" id="IPR005811">
    <property type="entry name" value="SUCC_ACL_C"/>
</dbReference>
<dbReference type="InterPro" id="IPR005809">
    <property type="entry name" value="Succ_CoA_ligase-like_bsu"/>
</dbReference>
<dbReference type="InterPro" id="IPR016102">
    <property type="entry name" value="Succinyl-CoA_synth-like"/>
</dbReference>
<dbReference type="NCBIfam" id="NF001913">
    <property type="entry name" value="PRK00696.1"/>
    <property type="match status" value="1"/>
</dbReference>
<dbReference type="NCBIfam" id="TIGR01016">
    <property type="entry name" value="sucCoAbeta"/>
    <property type="match status" value="1"/>
</dbReference>
<dbReference type="PANTHER" id="PTHR11815:SF10">
    <property type="entry name" value="SUCCINATE--COA LIGASE [GDP-FORMING] SUBUNIT BETA, MITOCHONDRIAL"/>
    <property type="match status" value="1"/>
</dbReference>
<dbReference type="PANTHER" id="PTHR11815">
    <property type="entry name" value="SUCCINYL-COA SYNTHETASE BETA CHAIN"/>
    <property type="match status" value="1"/>
</dbReference>
<dbReference type="Pfam" id="PF08442">
    <property type="entry name" value="ATP-grasp_2"/>
    <property type="match status" value="1"/>
</dbReference>
<dbReference type="Pfam" id="PF00549">
    <property type="entry name" value="Ligase_CoA"/>
    <property type="match status" value="1"/>
</dbReference>
<dbReference type="PIRSF" id="PIRSF001554">
    <property type="entry name" value="SucCS_beta"/>
    <property type="match status" value="1"/>
</dbReference>
<dbReference type="SUPFAM" id="SSF56059">
    <property type="entry name" value="Glutathione synthetase ATP-binding domain-like"/>
    <property type="match status" value="1"/>
</dbReference>
<dbReference type="SUPFAM" id="SSF52210">
    <property type="entry name" value="Succinyl-CoA synthetase domains"/>
    <property type="match status" value="1"/>
</dbReference>
<dbReference type="PROSITE" id="PS50975">
    <property type="entry name" value="ATP_GRASP"/>
    <property type="match status" value="1"/>
</dbReference>
<dbReference type="PROSITE" id="PS01217">
    <property type="entry name" value="SUCCINYL_COA_LIG_3"/>
    <property type="match status" value="1"/>
</dbReference>
<proteinExistence type="inferred from homology"/>
<accession>Q2P5E6</accession>
<comment type="function">
    <text evidence="1">Succinyl-CoA synthetase functions in the citric acid cycle (TCA), coupling the hydrolysis of succinyl-CoA to the synthesis of either ATP or GTP and thus represents the only step of substrate-level phosphorylation in the TCA. The beta subunit provides nucleotide specificity of the enzyme and binds the substrate succinate, while the binding sites for coenzyme A and phosphate are found in the alpha subunit.</text>
</comment>
<comment type="catalytic activity">
    <reaction evidence="1">
        <text>succinate + ATP + CoA = succinyl-CoA + ADP + phosphate</text>
        <dbReference type="Rhea" id="RHEA:17661"/>
        <dbReference type="ChEBI" id="CHEBI:30031"/>
        <dbReference type="ChEBI" id="CHEBI:30616"/>
        <dbReference type="ChEBI" id="CHEBI:43474"/>
        <dbReference type="ChEBI" id="CHEBI:57287"/>
        <dbReference type="ChEBI" id="CHEBI:57292"/>
        <dbReference type="ChEBI" id="CHEBI:456216"/>
        <dbReference type="EC" id="6.2.1.5"/>
    </reaction>
    <physiologicalReaction direction="right-to-left" evidence="1">
        <dbReference type="Rhea" id="RHEA:17663"/>
    </physiologicalReaction>
</comment>
<comment type="catalytic activity">
    <reaction evidence="1">
        <text>GTP + succinate + CoA = succinyl-CoA + GDP + phosphate</text>
        <dbReference type="Rhea" id="RHEA:22120"/>
        <dbReference type="ChEBI" id="CHEBI:30031"/>
        <dbReference type="ChEBI" id="CHEBI:37565"/>
        <dbReference type="ChEBI" id="CHEBI:43474"/>
        <dbReference type="ChEBI" id="CHEBI:57287"/>
        <dbReference type="ChEBI" id="CHEBI:57292"/>
        <dbReference type="ChEBI" id="CHEBI:58189"/>
    </reaction>
    <physiologicalReaction direction="right-to-left" evidence="1">
        <dbReference type="Rhea" id="RHEA:22122"/>
    </physiologicalReaction>
</comment>
<comment type="cofactor">
    <cofactor evidence="1">
        <name>Mg(2+)</name>
        <dbReference type="ChEBI" id="CHEBI:18420"/>
    </cofactor>
    <text evidence="1">Binds 1 Mg(2+) ion per subunit.</text>
</comment>
<comment type="pathway">
    <text evidence="1">Carbohydrate metabolism; tricarboxylic acid cycle; succinate from succinyl-CoA (ligase route): step 1/1.</text>
</comment>
<comment type="subunit">
    <text evidence="1">Heterotetramer of two alpha and two beta subunits.</text>
</comment>
<comment type="similarity">
    <text evidence="1">Belongs to the succinate/malate CoA ligase beta subunit family.</text>
</comment>
<reference key="1">
    <citation type="journal article" date="2005" name="Jpn. Agric. Res. Q.">
        <title>Genome sequence of Xanthomonas oryzae pv. oryzae suggests contribution of large numbers of effector genes and insertion sequences to its race diversity.</title>
        <authorList>
            <person name="Ochiai H."/>
            <person name="Inoue Y."/>
            <person name="Takeya M."/>
            <person name="Sasaki A."/>
            <person name="Kaku H."/>
        </authorList>
    </citation>
    <scope>NUCLEOTIDE SEQUENCE [LARGE SCALE GENOMIC DNA]</scope>
    <source>
        <strain>MAFF 311018</strain>
    </source>
</reference>
<keyword id="KW-0067">ATP-binding</keyword>
<keyword id="KW-0436">Ligase</keyword>
<keyword id="KW-0460">Magnesium</keyword>
<keyword id="KW-0479">Metal-binding</keyword>
<keyword id="KW-0547">Nucleotide-binding</keyword>
<keyword id="KW-0816">Tricarboxylic acid cycle</keyword>
<gene>
    <name evidence="1" type="primary">sucC</name>
    <name type="ordered locus">XOO1476</name>
</gene>
<protein>
    <recommendedName>
        <fullName evidence="1">Succinate--CoA ligase [ADP-forming] subunit beta</fullName>
        <ecNumber evidence="1">6.2.1.5</ecNumber>
    </recommendedName>
    <alternativeName>
        <fullName evidence="1">Succinyl-CoA synthetase subunit beta</fullName>
        <shortName evidence="1">SCS-beta</shortName>
    </alternativeName>
</protein>